<organism>
    <name type="scientific">Gallus gallus</name>
    <name type="common">Chicken</name>
    <dbReference type="NCBI Taxonomy" id="9031"/>
    <lineage>
        <taxon>Eukaryota</taxon>
        <taxon>Metazoa</taxon>
        <taxon>Chordata</taxon>
        <taxon>Craniata</taxon>
        <taxon>Vertebrata</taxon>
        <taxon>Euteleostomi</taxon>
        <taxon>Archelosauria</taxon>
        <taxon>Archosauria</taxon>
        <taxon>Dinosauria</taxon>
        <taxon>Saurischia</taxon>
        <taxon>Theropoda</taxon>
        <taxon>Coelurosauria</taxon>
        <taxon>Aves</taxon>
        <taxon>Neognathae</taxon>
        <taxon>Galloanserae</taxon>
        <taxon>Galliformes</taxon>
        <taxon>Phasianidae</taxon>
        <taxon>Phasianinae</taxon>
        <taxon>Gallus</taxon>
    </lineage>
</organism>
<accession>O12940</accession>
<accession>O12941</accession>
<dbReference type="EMBL" id="Y08740">
    <property type="protein sequence ID" value="CAA69995.1"/>
    <property type="molecule type" value="mRNA"/>
</dbReference>
<dbReference type="EMBL" id="Y08741">
    <property type="protein sequence ID" value="CAA69996.1"/>
    <property type="molecule type" value="mRNA"/>
</dbReference>
<dbReference type="RefSeq" id="NP_990475.1">
    <molecule id="O12940-1"/>
    <property type="nucleotide sequence ID" value="NM_205144.3"/>
</dbReference>
<dbReference type="SMR" id="O12940"/>
<dbReference type="FunCoup" id="O12940">
    <property type="interactions" value="787"/>
</dbReference>
<dbReference type="STRING" id="9031.ENSGALP00000020470"/>
<dbReference type="GlyGen" id="O12940">
    <property type="glycosylation" value="3 sites"/>
</dbReference>
<dbReference type="PaxDb" id="9031-ENSGALP00000020470"/>
<dbReference type="Ensembl" id="ENSGALT00010036603.1">
    <molecule id="O12940-2"/>
    <property type="protein sequence ID" value="ENSGALP00010021340.1"/>
    <property type="gene ID" value="ENSGALG00010015191.1"/>
</dbReference>
<dbReference type="Ensembl" id="ENSGALT00010036627.1">
    <molecule id="O12940-1"/>
    <property type="protein sequence ID" value="ENSGALP00010021360.1"/>
    <property type="gene ID" value="ENSGALG00010015191.1"/>
</dbReference>
<dbReference type="GeneID" id="396049"/>
<dbReference type="KEGG" id="gga:396049"/>
<dbReference type="CTD" id="10043"/>
<dbReference type="VEuPathDB" id="HostDB:geneid_396049"/>
<dbReference type="eggNOG" id="KOG1087">
    <property type="taxonomic scope" value="Eukaryota"/>
</dbReference>
<dbReference type="GeneTree" id="ENSGT00940000156865"/>
<dbReference type="HOGENOM" id="CLU_043812_3_0_1"/>
<dbReference type="InParanoid" id="O12940"/>
<dbReference type="OMA" id="GNHKSDM"/>
<dbReference type="OrthoDB" id="2018246at2759"/>
<dbReference type="PhylomeDB" id="O12940"/>
<dbReference type="TreeFam" id="TF314105"/>
<dbReference type="Reactome" id="R-GGA-6798695">
    <property type="pathway name" value="Neutrophil degranulation"/>
</dbReference>
<dbReference type="PRO" id="PR:O12940"/>
<dbReference type="Proteomes" id="UP000000539">
    <property type="component" value="Chromosome 1"/>
</dbReference>
<dbReference type="Bgee" id="ENSGALG00000012552">
    <property type="expression patterns" value="Expressed in muscle tissue and 13 other cell types or tissues"/>
</dbReference>
<dbReference type="GO" id="GO:0005737">
    <property type="term" value="C:cytoplasm"/>
    <property type="evidence" value="ECO:0000250"/>
    <property type="project" value="UniProtKB"/>
</dbReference>
<dbReference type="GO" id="GO:0005829">
    <property type="term" value="C:cytosol"/>
    <property type="evidence" value="ECO:0000250"/>
    <property type="project" value="AgBase"/>
</dbReference>
<dbReference type="GO" id="GO:0005769">
    <property type="term" value="C:early endosome"/>
    <property type="evidence" value="ECO:0000250"/>
    <property type="project" value="AgBase"/>
</dbReference>
<dbReference type="GO" id="GO:0031901">
    <property type="term" value="C:early endosome membrane"/>
    <property type="evidence" value="ECO:0007669"/>
    <property type="project" value="UniProtKB-SubCell"/>
</dbReference>
<dbReference type="GO" id="GO:0005768">
    <property type="term" value="C:endosome"/>
    <property type="evidence" value="ECO:0000250"/>
    <property type="project" value="UniProtKB"/>
</dbReference>
<dbReference type="GO" id="GO:0010008">
    <property type="term" value="C:endosome membrane"/>
    <property type="evidence" value="ECO:0000250"/>
    <property type="project" value="UniProtKB"/>
</dbReference>
<dbReference type="GO" id="GO:0005794">
    <property type="term" value="C:Golgi apparatus"/>
    <property type="evidence" value="ECO:0007669"/>
    <property type="project" value="Ensembl"/>
</dbReference>
<dbReference type="GO" id="GO:0016020">
    <property type="term" value="C:membrane"/>
    <property type="evidence" value="ECO:0000250"/>
    <property type="project" value="AgBase"/>
</dbReference>
<dbReference type="GO" id="GO:0030276">
    <property type="term" value="F:clathrin binding"/>
    <property type="evidence" value="ECO:0000318"/>
    <property type="project" value="GO_Central"/>
</dbReference>
<dbReference type="GO" id="GO:0032050">
    <property type="term" value="F:clathrin heavy chain binding"/>
    <property type="evidence" value="ECO:0000250"/>
    <property type="project" value="UniProtKB"/>
</dbReference>
<dbReference type="GO" id="GO:0070853">
    <property type="term" value="F:myosin VI binding"/>
    <property type="evidence" value="ECO:0000250"/>
    <property type="project" value="UniProtKB"/>
</dbReference>
<dbReference type="GO" id="GO:0010314">
    <property type="term" value="F:phosphatidylinositol-5-phosphate binding"/>
    <property type="evidence" value="ECO:0000250"/>
    <property type="project" value="UniProtKB"/>
</dbReference>
<dbReference type="GO" id="GO:0031593">
    <property type="term" value="F:polyubiquitin modification-dependent protein binding"/>
    <property type="evidence" value="ECO:0000250"/>
    <property type="project" value="UniProtKB"/>
</dbReference>
<dbReference type="GO" id="GO:0043130">
    <property type="term" value="F:ubiquitin binding"/>
    <property type="evidence" value="ECO:0000250"/>
    <property type="project" value="UniProtKB"/>
</dbReference>
<dbReference type="GO" id="GO:0061909">
    <property type="term" value="P:autophagosome-lysosome fusion"/>
    <property type="evidence" value="ECO:0000250"/>
    <property type="project" value="UniProtKB"/>
</dbReference>
<dbReference type="GO" id="GO:0016197">
    <property type="term" value="P:endosomal transport"/>
    <property type="evidence" value="ECO:0000250"/>
    <property type="project" value="UniProtKB"/>
</dbReference>
<dbReference type="GO" id="GO:1901098">
    <property type="term" value="P:positive regulation of autophagosome maturation"/>
    <property type="evidence" value="ECO:0000250"/>
    <property type="project" value="UniProtKB"/>
</dbReference>
<dbReference type="GO" id="GO:0015031">
    <property type="term" value="P:protein transport"/>
    <property type="evidence" value="ECO:0007669"/>
    <property type="project" value="UniProtKB-KW"/>
</dbReference>
<dbReference type="GO" id="GO:1904978">
    <property type="term" value="P:regulation of endosome organization"/>
    <property type="evidence" value="ECO:0000250"/>
    <property type="project" value="UniProtKB"/>
</dbReference>
<dbReference type="GO" id="GO:0007165">
    <property type="term" value="P:signal transduction"/>
    <property type="evidence" value="ECO:0000318"/>
    <property type="project" value="GO_Central"/>
</dbReference>
<dbReference type="GO" id="GO:0061753">
    <property type="term" value="P:substrate localization to autophagosome"/>
    <property type="evidence" value="ECO:0000250"/>
    <property type="project" value="UniProtKB"/>
</dbReference>
<dbReference type="CDD" id="cd14236">
    <property type="entry name" value="GAT_TOM1"/>
    <property type="match status" value="1"/>
</dbReference>
<dbReference type="CDD" id="cd16995">
    <property type="entry name" value="VHS_Tom1"/>
    <property type="match status" value="1"/>
</dbReference>
<dbReference type="FunFam" id="1.20.58.160:FF:000001">
    <property type="entry name" value="TOM1-like protein 2 isoform X1"/>
    <property type="match status" value="1"/>
</dbReference>
<dbReference type="FunFam" id="1.25.40.90:FF:000003">
    <property type="entry name" value="TOM1-like protein 2 isoform X1"/>
    <property type="match status" value="1"/>
</dbReference>
<dbReference type="Gene3D" id="1.20.58.160">
    <property type="match status" value="1"/>
</dbReference>
<dbReference type="Gene3D" id="1.25.40.90">
    <property type="match status" value="1"/>
</dbReference>
<dbReference type="InterPro" id="IPR008942">
    <property type="entry name" value="ENTH_VHS"/>
</dbReference>
<dbReference type="InterPro" id="IPR004152">
    <property type="entry name" value="GAT_dom"/>
</dbReference>
<dbReference type="InterPro" id="IPR038425">
    <property type="entry name" value="GAT_sf"/>
</dbReference>
<dbReference type="InterPro" id="IPR014645">
    <property type="entry name" value="TOM1"/>
</dbReference>
<dbReference type="InterPro" id="IPR002014">
    <property type="entry name" value="VHS_dom"/>
</dbReference>
<dbReference type="PANTHER" id="PTHR13856:SF32">
    <property type="entry name" value="TARGET OF MYB1 MEMBRANE TRAFFICKING PROTEIN"/>
    <property type="match status" value="1"/>
</dbReference>
<dbReference type="PANTHER" id="PTHR13856">
    <property type="entry name" value="VHS DOMAIN CONTAINING PROTEIN FAMILY"/>
    <property type="match status" value="1"/>
</dbReference>
<dbReference type="Pfam" id="PF03127">
    <property type="entry name" value="GAT"/>
    <property type="match status" value="1"/>
</dbReference>
<dbReference type="Pfam" id="PF00790">
    <property type="entry name" value="VHS"/>
    <property type="match status" value="1"/>
</dbReference>
<dbReference type="PIRSF" id="PIRSF036948">
    <property type="entry name" value="TOM1"/>
    <property type="match status" value="1"/>
</dbReference>
<dbReference type="SMART" id="SM00288">
    <property type="entry name" value="VHS"/>
    <property type="match status" value="1"/>
</dbReference>
<dbReference type="SUPFAM" id="SSF48464">
    <property type="entry name" value="ENTH/VHS domain"/>
    <property type="match status" value="1"/>
</dbReference>
<dbReference type="SUPFAM" id="SSF89009">
    <property type="entry name" value="GAT-like domain"/>
    <property type="match status" value="1"/>
</dbReference>
<dbReference type="PROSITE" id="PS50909">
    <property type="entry name" value="GAT"/>
    <property type="match status" value="1"/>
</dbReference>
<dbReference type="PROSITE" id="PS50179">
    <property type="entry name" value="VHS"/>
    <property type="match status" value="1"/>
</dbReference>
<proteinExistence type="evidence at transcript level"/>
<protein>
    <recommendedName>
        <fullName evidence="1">Target of Myb1 membrane trafficking protein</fullName>
    </recommendedName>
    <alternativeName>
        <fullName evidence="6">Target of Myb protein 1</fullName>
        <shortName evidence="6">Tom-1</shortName>
    </alternativeName>
</protein>
<comment type="function">
    <text evidence="1">Adapter protein that plays a role in the intracellular membrane trafficking of ubiquitinated proteins, thereby participating in autophagy, ubiquitination-dependent signaling and receptor recycling pathways (By similarity). Acts as a MYO6/Myosin VI adapter protein that targets MYO6 to endocytic structures (By similarity). Together with MYO6, required for autophagosomal delivery of endocytic cargo, the maturation of autophagosomes and their fusion with lysosomes (By similarity). MYO6 links TOM1 with autophagy receptors, such as TAX1BP1; CALCOCO2/NDP52 and OPTN (By similarity). Binds to polyubiquitinated proteins via its GAT domain (By similarity). In a complex with TOLLIP, recruits ubiquitin-conjugated proteins onto early endosomes (By similarity). The Tom1-Tollip complex may regulate endosomal trafficking by linking polyubiquitinated proteins to clathrin (By similarity). Mediates clathrin recruitment to early endosomes (By similarity). Modulates binding of TOLLIP to phosphatidylinositol 3-phosphate (PtdIns(3)P) via binding competition; the association with TOLLIP may favor the release of TOLLIP from endosomal membranes, allowing TOLLIP to commit to cargo trafficking (By similarity). Acts as a phosphatidylinositol 5-phosphate (PtdIns(5)P) effector by binding to PtdIns(5)P, thereby regulating endosomal maturation (By similarity). PtdIns(5)P-dependent recruitment to signaling endosomes may block endosomal maturation (By similarity). Also inhibits Toll-like receptor (TLR) signaling and participates in immune receptor recycling (By similarity).</text>
</comment>
<comment type="subunit">
    <text evidence="1">Found in a complex with TOLLIP; interacts (via GAT domain) with TOLLIP (via N-terminus); the interactions leads to TOM1-recruitment to endosomes and inhibition of TOLLIP binding to PtdIns(3)P (By similarity). Interacts (via GAT domain and the C-terminal part of the VHS domain) with UBC/ubiquitin (By similarity). Interacts (via clathrin box and C-terminus) with clathrin heavy chain (By similarity). Interacts with MYO6 (By similarity).</text>
</comment>
<comment type="subcellular location">
    <subcellularLocation>
        <location evidence="1">Cytoplasm</location>
    </subcellularLocation>
    <subcellularLocation>
        <location evidence="1">Endosome membrane</location>
        <topology evidence="6">Peripheral membrane protein</topology>
    </subcellularLocation>
    <subcellularLocation>
        <location evidence="1">Early endosome membrane</location>
        <topology evidence="6">Peripheral membrane protein</topology>
    </subcellularLocation>
</comment>
<comment type="alternative products">
    <event type="alternative splicing"/>
    <isoform>
        <id>O12940-1</id>
        <name>1</name>
        <name>Tom-1A</name>
        <sequence type="displayed"/>
    </isoform>
    <isoform>
        <id>O12940-2</id>
        <name>2</name>
        <name>Tom-1A</name>
        <sequence type="described" ref="VSP_003993 VSP_003994 VSP_003995"/>
    </isoform>
</comment>
<comment type="induction">
    <text>Expression is cooperatively activated by MYB and CEBPG.</text>
</comment>
<comment type="domain">
    <text evidence="1">The GAT domain and the VHS domain are required for the interaction with polyubiquitinated proteins.</text>
</comment>
<comment type="domain">
    <text evidence="1">The VHS domain binds to phosphatidylinositol monophosphates (By similarity). The KRKK motif within the VHS domain is required for binding to phosphatidylinositol monophosphates, with a preference for phosphatidylinositol 5-phosphate (PtdIns(5)P) (By similarity).</text>
</comment>
<comment type="PTM">
    <text evidence="1">Monoubiquitinated.</text>
</comment>
<comment type="similarity">
    <text evidence="6">Belongs to the TOM1 family.</text>
</comment>
<feature type="chain" id="PRO_0000072627" description="Target of Myb1 membrane trafficking protein">
    <location>
        <begin position="1"/>
        <end position="515"/>
    </location>
</feature>
<feature type="domain" description="VHS" evidence="2">
    <location>
        <begin position="20"/>
        <end position="152"/>
    </location>
</feature>
<feature type="domain" description="GAT" evidence="3">
    <location>
        <begin position="215"/>
        <end position="303"/>
    </location>
</feature>
<feature type="region of interest" description="Disordered" evidence="4">
    <location>
        <begin position="166"/>
        <end position="185"/>
    </location>
</feature>
<feature type="region of interest" description="Disordered" evidence="4">
    <location>
        <begin position="307"/>
        <end position="333"/>
    </location>
</feature>
<feature type="region of interest" description="Clathrin box" evidence="1">
    <location>
        <begin position="319"/>
        <end position="324"/>
    </location>
</feature>
<feature type="region of interest" description="Interaction with MYO6" evidence="1">
    <location>
        <begin position="397"/>
        <end position="488"/>
    </location>
</feature>
<feature type="region of interest" description="Disordered" evidence="4">
    <location>
        <begin position="480"/>
        <end position="515"/>
    </location>
</feature>
<feature type="short sequence motif" description="KRKK" evidence="1">
    <location>
        <begin position="48"/>
        <end position="56"/>
    </location>
</feature>
<feature type="compositionally biased region" description="Polar residues" evidence="4">
    <location>
        <begin position="169"/>
        <end position="185"/>
    </location>
</feature>
<feature type="compositionally biased region" description="Basic and acidic residues" evidence="4">
    <location>
        <begin position="505"/>
        <end position="515"/>
    </location>
</feature>
<feature type="splice variant" id="VSP_003993" description="In isoform 2." evidence="5">
    <location>
        <begin position="1"/>
        <end position="347"/>
    </location>
</feature>
<feature type="splice variant" id="VSP_003994" description="In isoform 2." evidence="5">
    <original>TLGSRSVSAGLHSLDTSGKLEEEFDMFAVTRGSSLAEQRRE</original>
    <variation>MICYSCKKGPGWRGNLMRASGRGFILLAWMDCFPQSAWIRW</variation>
    <location>
        <begin position="348"/>
        <end position="388"/>
    </location>
</feature>
<feature type="splice variant" id="VSP_003995" description="In isoform 2." evidence="5">
    <location>
        <begin position="414"/>
        <end position="434"/>
    </location>
</feature>
<keyword id="KW-0025">Alternative splicing</keyword>
<keyword id="KW-0963">Cytoplasm</keyword>
<keyword id="KW-0967">Endosome</keyword>
<keyword id="KW-0472">Membrane</keyword>
<keyword id="KW-0653">Protein transport</keyword>
<keyword id="KW-1185">Reference proteome</keyword>
<keyword id="KW-0813">Transport</keyword>
<keyword id="KW-0832">Ubl conjugation</keyword>
<name>TOM1_CHICK</name>
<sequence>MDFLLGNPFSSPVGQRIERATDGSLRGEDWSLNMEICDIINETEEGPKDAFRAIKKRIVGNKNFHEVMLALTVLETCVKNCGHRFHILVASQDFVESVLVRTILPKNNPPAIVHDKVLTLIQSWADAFRSSPDLTGVVAVYEDLRRKGLEFPMTDLDMLSPIHTPRRSVYSSNSQSGQNSPAVNSPQQMESILHPVTLPSGRDTSSNVPITPTQEQIKKLRSELEVVNGNVKVMSEMLTELVPSQAETSDLELLQELNRTCRAMQQRVLELIPRVQHEQLTEELLLINDNLNNVFLRHERFERVRTGQPVKAPSEAENNLIDLRPSTPPAVRQPEVTNNLSSQLAGMTLGSRSVSAGLHSLDTSGKLEEEFDMFAVTRGSSLAEQRREVKYEDPQATKGLAGALDARQQNTGAEESSASSDGAQLTNWMMRQGMVPVPQANFMEDIEKWLSTDVGESEDGKGVTSEEFDKFLEERAKVADRLPTLSSSSAGTPVSPAAASRHQKQAKEDDAMFAL</sequence>
<reference key="1">
    <citation type="journal article" date="1997" name="EMBO J.">
        <title>tom-1, a novel v-Myb target gene expressed in AMV- and E26-transformed myelomonocytic cells.</title>
        <authorList>
            <person name="Burk O."/>
            <person name="Worpenberg S."/>
            <person name="Haenig B."/>
            <person name="Klempnauer K.-H."/>
        </authorList>
    </citation>
    <scope>NUCLEOTIDE SEQUENCE [MRNA] (ISOFORMS 1 AND 2)</scope>
    <source>
        <strain>SPAFAS</strain>
        <tissue>Bone marrow</tissue>
    </source>
</reference>
<evidence type="ECO:0000250" key="1">
    <source>
        <dbReference type="UniProtKB" id="O60784"/>
    </source>
</evidence>
<evidence type="ECO:0000255" key="2">
    <source>
        <dbReference type="PROSITE-ProRule" id="PRU00218"/>
    </source>
</evidence>
<evidence type="ECO:0000255" key="3">
    <source>
        <dbReference type="PROSITE-ProRule" id="PRU00373"/>
    </source>
</evidence>
<evidence type="ECO:0000256" key="4">
    <source>
        <dbReference type="SAM" id="MobiDB-lite"/>
    </source>
</evidence>
<evidence type="ECO:0000303" key="5">
    <source>
    </source>
</evidence>
<evidence type="ECO:0000305" key="6"/>
<gene>
    <name type="primary">TOM1</name>
</gene>